<evidence type="ECO:0000255" key="1">
    <source>
        <dbReference type="HAMAP-Rule" id="MF_00122"/>
    </source>
</evidence>
<comment type="function">
    <text evidence="1">Allows the formation of correctly charged Asn-tRNA(Asn) or Gln-tRNA(Gln) through the transamidation of misacylated Asp-tRNA(Asn) or Glu-tRNA(Gln) in organisms which lack either or both of asparaginyl-tRNA or glutaminyl-tRNA synthetases. The reaction takes place in the presence of glutamine and ATP through an activated phospho-Asp-tRNA(Asn) or phospho-Glu-tRNA(Gln).</text>
</comment>
<comment type="catalytic activity">
    <reaction evidence="1">
        <text>L-glutamyl-tRNA(Gln) + L-glutamine + ATP + H2O = L-glutaminyl-tRNA(Gln) + L-glutamate + ADP + phosphate + H(+)</text>
        <dbReference type="Rhea" id="RHEA:17521"/>
        <dbReference type="Rhea" id="RHEA-COMP:9681"/>
        <dbReference type="Rhea" id="RHEA-COMP:9684"/>
        <dbReference type="ChEBI" id="CHEBI:15377"/>
        <dbReference type="ChEBI" id="CHEBI:15378"/>
        <dbReference type="ChEBI" id="CHEBI:29985"/>
        <dbReference type="ChEBI" id="CHEBI:30616"/>
        <dbReference type="ChEBI" id="CHEBI:43474"/>
        <dbReference type="ChEBI" id="CHEBI:58359"/>
        <dbReference type="ChEBI" id="CHEBI:78520"/>
        <dbReference type="ChEBI" id="CHEBI:78521"/>
        <dbReference type="ChEBI" id="CHEBI:456216"/>
    </reaction>
</comment>
<comment type="catalytic activity">
    <reaction evidence="1">
        <text>L-aspartyl-tRNA(Asn) + L-glutamine + ATP + H2O = L-asparaginyl-tRNA(Asn) + L-glutamate + ADP + phosphate + 2 H(+)</text>
        <dbReference type="Rhea" id="RHEA:14513"/>
        <dbReference type="Rhea" id="RHEA-COMP:9674"/>
        <dbReference type="Rhea" id="RHEA-COMP:9677"/>
        <dbReference type="ChEBI" id="CHEBI:15377"/>
        <dbReference type="ChEBI" id="CHEBI:15378"/>
        <dbReference type="ChEBI" id="CHEBI:29985"/>
        <dbReference type="ChEBI" id="CHEBI:30616"/>
        <dbReference type="ChEBI" id="CHEBI:43474"/>
        <dbReference type="ChEBI" id="CHEBI:58359"/>
        <dbReference type="ChEBI" id="CHEBI:78515"/>
        <dbReference type="ChEBI" id="CHEBI:78516"/>
        <dbReference type="ChEBI" id="CHEBI:456216"/>
    </reaction>
</comment>
<comment type="subunit">
    <text evidence="1">Heterotrimer of A, B and C subunits.</text>
</comment>
<comment type="similarity">
    <text evidence="1">Belongs to the GatC family.</text>
</comment>
<accession>A1K1T6</accession>
<keyword id="KW-0067">ATP-binding</keyword>
<keyword id="KW-0436">Ligase</keyword>
<keyword id="KW-0547">Nucleotide-binding</keyword>
<keyword id="KW-0648">Protein biosynthesis</keyword>
<keyword id="KW-1185">Reference proteome</keyword>
<organism>
    <name type="scientific">Azoarcus sp. (strain BH72)</name>
    <dbReference type="NCBI Taxonomy" id="418699"/>
    <lineage>
        <taxon>Bacteria</taxon>
        <taxon>Pseudomonadati</taxon>
        <taxon>Pseudomonadota</taxon>
        <taxon>Betaproteobacteria</taxon>
        <taxon>Rhodocyclales</taxon>
        <taxon>Zoogloeaceae</taxon>
        <taxon>Azoarcus</taxon>
    </lineage>
</organism>
<dbReference type="EC" id="6.3.5.-" evidence="1"/>
<dbReference type="EMBL" id="AM406670">
    <property type="protein sequence ID" value="CAL92791.1"/>
    <property type="molecule type" value="Genomic_DNA"/>
</dbReference>
<dbReference type="RefSeq" id="WP_011763909.1">
    <property type="nucleotide sequence ID" value="NC_008702.1"/>
</dbReference>
<dbReference type="SMR" id="A1K1T6"/>
<dbReference type="STRING" id="62928.azo0173"/>
<dbReference type="KEGG" id="aoa:dqs_0182"/>
<dbReference type="KEGG" id="azo:azo0173"/>
<dbReference type="eggNOG" id="COG0721">
    <property type="taxonomic scope" value="Bacteria"/>
</dbReference>
<dbReference type="HOGENOM" id="CLU_105899_2_2_4"/>
<dbReference type="OrthoDB" id="9794326at2"/>
<dbReference type="Proteomes" id="UP000002588">
    <property type="component" value="Chromosome"/>
</dbReference>
<dbReference type="GO" id="GO:0050566">
    <property type="term" value="F:asparaginyl-tRNA synthase (glutamine-hydrolyzing) activity"/>
    <property type="evidence" value="ECO:0007669"/>
    <property type="project" value="RHEA"/>
</dbReference>
<dbReference type="GO" id="GO:0005524">
    <property type="term" value="F:ATP binding"/>
    <property type="evidence" value="ECO:0007669"/>
    <property type="project" value="UniProtKB-KW"/>
</dbReference>
<dbReference type="GO" id="GO:0050567">
    <property type="term" value="F:glutaminyl-tRNA synthase (glutamine-hydrolyzing) activity"/>
    <property type="evidence" value="ECO:0007669"/>
    <property type="project" value="UniProtKB-UniRule"/>
</dbReference>
<dbReference type="GO" id="GO:0070681">
    <property type="term" value="P:glutaminyl-tRNAGln biosynthesis via transamidation"/>
    <property type="evidence" value="ECO:0007669"/>
    <property type="project" value="TreeGrafter"/>
</dbReference>
<dbReference type="GO" id="GO:0006450">
    <property type="term" value="P:regulation of translational fidelity"/>
    <property type="evidence" value="ECO:0007669"/>
    <property type="project" value="InterPro"/>
</dbReference>
<dbReference type="GO" id="GO:0006412">
    <property type="term" value="P:translation"/>
    <property type="evidence" value="ECO:0007669"/>
    <property type="project" value="UniProtKB-UniRule"/>
</dbReference>
<dbReference type="Gene3D" id="1.10.20.60">
    <property type="entry name" value="Glu-tRNAGln amidotransferase C subunit, N-terminal domain"/>
    <property type="match status" value="1"/>
</dbReference>
<dbReference type="HAMAP" id="MF_00122">
    <property type="entry name" value="GatC"/>
    <property type="match status" value="1"/>
</dbReference>
<dbReference type="InterPro" id="IPR036113">
    <property type="entry name" value="Asp/Glu-ADT_sf_sub_c"/>
</dbReference>
<dbReference type="InterPro" id="IPR003837">
    <property type="entry name" value="GatC"/>
</dbReference>
<dbReference type="NCBIfam" id="TIGR00135">
    <property type="entry name" value="gatC"/>
    <property type="match status" value="1"/>
</dbReference>
<dbReference type="PANTHER" id="PTHR15004">
    <property type="entry name" value="GLUTAMYL-TRNA(GLN) AMIDOTRANSFERASE SUBUNIT C, MITOCHONDRIAL"/>
    <property type="match status" value="1"/>
</dbReference>
<dbReference type="PANTHER" id="PTHR15004:SF0">
    <property type="entry name" value="GLUTAMYL-TRNA(GLN) AMIDOTRANSFERASE SUBUNIT C, MITOCHONDRIAL"/>
    <property type="match status" value="1"/>
</dbReference>
<dbReference type="Pfam" id="PF02686">
    <property type="entry name" value="GatC"/>
    <property type="match status" value="1"/>
</dbReference>
<dbReference type="SUPFAM" id="SSF141000">
    <property type="entry name" value="Glu-tRNAGln amidotransferase C subunit"/>
    <property type="match status" value="1"/>
</dbReference>
<reference key="1">
    <citation type="journal article" date="2006" name="Nat. Biotechnol.">
        <title>Complete genome of the mutualistic, N2-fixing grass endophyte Azoarcus sp. strain BH72.</title>
        <authorList>
            <person name="Krause A."/>
            <person name="Ramakumar A."/>
            <person name="Bartels D."/>
            <person name="Battistoni F."/>
            <person name="Bekel T."/>
            <person name="Boch J."/>
            <person name="Boehm M."/>
            <person name="Friedrich F."/>
            <person name="Hurek T."/>
            <person name="Krause L."/>
            <person name="Linke B."/>
            <person name="McHardy A.C."/>
            <person name="Sarkar A."/>
            <person name="Schneiker S."/>
            <person name="Syed A.A."/>
            <person name="Thauer R."/>
            <person name="Vorhoelter F.-J."/>
            <person name="Weidner S."/>
            <person name="Puehler A."/>
            <person name="Reinhold-Hurek B."/>
            <person name="Kaiser O."/>
            <person name="Goesmann A."/>
        </authorList>
    </citation>
    <scope>NUCLEOTIDE SEQUENCE [LARGE SCALE GENOMIC DNA]</scope>
    <source>
        <strain>BH72</strain>
    </source>
</reference>
<feature type="chain" id="PRO_1000016065" description="Aspartyl/glutamyl-tRNA(Asn/Gln) amidotransferase subunit C">
    <location>
        <begin position="1"/>
        <end position="95"/>
    </location>
</feature>
<protein>
    <recommendedName>
        <fullName evidence="1">Aspartyl/glutamyl-tRNA(Asn/Gln) amidotransferase subunit C</fullName>
        <shortName evidence="1">Asp/Glu-ADT subunit C</shortName>
        <ecNumber evidence="1">6.3.5.-</ecNumber>
    </recommendedName>
</protein>
<gene>
    <name evidence="1" type="primary">gatC</name>
    <name type="ordered locus">azo0173</name>
</gene>
<name>GATC_AZOSB</name>
<proteinExistence type="inferred from homology"/>
<sequence>MSLSNEQVGRIARLARLAISEGEIDAVRAKLDGIFGLIEQMQAVDTAGVEPMSHPQELATRLRDDVVTETDRRSAFQSVAPQTEAGLYLVPKVIE</sequence>